<comment type="function">
    <text evidence="2">May play a role in cardiac physiology.</text>
</comment>
<comment type="catalytic activity">
    <reaction evidence="2">
        <text>L-seryl-[protein] + ATP = O-phospho-L-seryl-[protein] + ADP + H(+)</text>
        <dbReference type="Rhea" id="RHEA:17989"/>
        <dbReference type="Rhea" id="RHEA-COMP:9863"/>
        <dbReference type="Rhea" id="RHEA-COMP:11604"/>
        <dbReference type="ChEBI" id="CHEBI:15378"/>
        <dbReference type="ChEBI" id="CHEBI:29999"/>
        <dbReference type="ChEBI" id="CHEBI:30616"/>
        <dbReference type="ChEBI" id="CHEBI:83421"/>
        <dbReference type="ChEBI" id="CHEBI:456216"/>
        <dbReference type="EC" id="2.7.11.1"/>
    </reaction>
</comment>
<comment type="catalytic activity">
    <reaction evidence="2">
        <text>L-threonyl-[protein] + ATP = O-phospho-L-threonyl-[protein] + ADP + H(+)</text>
        <dbReference type="Rhea" id="RHEA:46608"/>
        <dbReference type="Rhea" id="RHEA-COMP:11060"/>
        <dbReference type="Rhea" id="RHEA-COMP:11605"/>
        <dbReference type="ChEBI" id="CHEBI:15378"/>
        <dbReference type="ChEBI" id="CHEBI:30013"/>
        <dbReference type="ChEBI" id="CHEBI:30616"/>
        <dbReference type="ChEBI" id="CHEBI:61977"/>
        <dbReference type="ChEBI" id="CHEBI:456216"/>
        <dbReference type="EC" id="2.7.11.1"/>
    </reaction>
</comment>
<comment type="cofactor">
    <cofactor evidence="2">
        <name>Mg(2+)</name>
        <dbReference type="ChEBI" id="CHEBI:18420"/>
    </cofactor>
</comment>
<comment type="subunit">
    <text evidence="1">Interacts with TNNI3, ACTC, ACTA1, MYBPC3, AIP, FABP3 and HADHB.</text>
</comment>
<comment type="subcellular location">
    <subcellularLocation>
        <location evidence="1">Nucleus</location>
    </subcellularLocation>
    <subcellularLocation>
        <location evidence="1">Cytoplasm</location>
    </subcellularLocation>
    <text evidence="1">Expressed at lower levels in the cytoplasm.</text>
</comment>
<comment type="PTM">
    <text evidence="2">Autophosphorylated.</text>
</comment>
<comment type="similarity">
    <text evidence="5">Belongs to the protein kinase superfamily. TKL Ser/Thr protein kinase family. MAP kinase kinase kinase subfamily.</text>
</comment>
<accession>Q7TQP6</accession>
<sequence>MGNYKSRPTQTCSDEWKKKVSESYAIIIERLEDNLQIKENEFQELRHIFGSDEAFSEVSLNYRTERGLSLLHLCCVCGGNKSHIRALMLKGLRPSRLTRNGFPALHLAVYKDSPELITSLLHSGADVQQVGYGGLTALHIAAIAGHPEAAEVLLQHGANVNVQDAVFFTPLHIAAYYGHEQVTSVLLKFGADVNVSGEVGDRPLHLASAKGFFNIVKLLVEEGSKADVNAQDNEDHVPLHFCSRFGHHNIVSYLLQSDLEVQPHVINIYGDTPLHLACYNGNFEVAKEIVQVTGTESLTKENIFSETAFHSACTYGKNIDLVKFLLDQNAVNINHRGRDGHTGLHSACYHGHIRLVQFLLDNGADMNLVACDPSRSSGEKDEQTCLMWAYEKGHDAIVTLLKHYKRPQEELPCNEYSQPGGDGSYVSVPSPLGKIKSMTKEKADVLLLRAELPSRFHLQLSEIEFHEIIGSGSFGKVYKGRCRNKIVAIKRYRANTYCSKSDVDMFCREVSILCQLNHPCVVQFVGACLDDPSQFAIVTQYISGGSLFSLLHEQKRILDLQSKLIIAVDVAKGMEYLHSLTQPIIHRDLNSHNILLYEDGHAVVADFGESRFLQSLDEDNMTKQPGNLRWMAPEVFTQCTRYTIKADVFSYSLCLWELLTGEIPFAHLKPAAAAADMAYHHIRPPIGYSIPKPISSLLIRGWNACPEGRPEFSEVVSKLEECLCNVELMSPASSNSSGSLSPSSSSDCLLSRGGPGRSHVAALRSRFELEYALNARSYAGWSQSVGTHSNPGLSLEEMNRSTQYSTVDKYGYVSDPMSLTHLHSRQDDSNFEDSN</sequence>
<protein>
    <recommendedName>
        <fullName>Serine/threonine-protein kinase TNNI3K</fullName>
        <ecNumber>2.7.11.1</ecNumber>
    </recommendedName>
    <alternativeName>
        <fullName>Cardiac ankyrin repeat kinase</fullName>
    </alternativeName>
    <alternativeName>
        <fullName>TNNI3-interacting kinase</fullName>
    </alternativeName>
</protein>
<keyword id="KW-0040">ANK repeat</keyword>
<keyword id="KW-0067">ATP-binding</keyword>
<keyword id="KW-0175">Coiled coil</keyword>
<keyword id="KW-0963">Cytoplasm</keyword>
<keyword id="KW-0418">Kinase</keyword>
<keyword id="KW-0449">Lipoprotein</keyword>
<keyword id="KW-0460">Magnesium</keyword>
<keyword id="KW-0479">Metal-binding</keyword>
<keyword id="KW-0519">Myristate</keyword>
<keyword id="KW-0547">Nucleotide-binding</keyword>
<keyword id="KW-0539">Nucleus</keyword>
<keyword id="KW-0597">Phosphoprotein</keyword>
<keyword id="KW-1185">Reference proteome</keyword>
<keyword id="KW-0677">Repeat</keyword>
<keyword id="KW-0723">Serine/threonine-protein kinase</keyword>
<keyword id="KW-0808">Transferase</keyword>
<reference evidence="6" key="1">
    <citation type="submission" date="2003-05" db="EMBL/GenBank/DDBJ databases">
        <authorList>
            <person name="Jeyaseelan R."/>
        </authorList>
    </citation>
    <scope>NUCLEOTIDE SEQUENCE [MRNA]</scope>
</reference>
<organism>
    <name type="scientific">Rattus norvegicus</name>
    <name type="common">Rat</name>
    <dbReference type="NCBI Taxonomy" id="10116"/>
    <lineage>
        <taxon>Eukaryota</taxon>
        <taxon>Metazoa</taxon>
        <taxon>Chordata</taxon>
        <taxon>Craniata</taxon>
        <taxon>Vertebrata</taxon>
        <taxon>Euteleostomi</taxon>
        <taxon>Mammalia</taxon>
        <taxon>Eutheria</taxon>
        <taxon>Euarchontoglires</taxon>
        <taxon>Glires</taxon>
        <taxon>Rodentia</taxon>
        <taxon>Myomorpha</taxon>
        <taxon>Muroidea</taxon>
        <taxon>Muridae</taxon>
        <taxon>Murinae</taxon>
        <taxon>Rattus</taxon>
    </lineage>
</organism>
<proteinExistence type="evidence at transcript level"/>
<feature type="initiator methionine" description="Removed" evidence="3">
    <location>
        <position position="1"/>
    </location>
</feature>
<feature type="chain" id="PRO_0000086760" description="Serine/threonine-protein kinase TNNI3K">
    <location>
        <begin position="2"/>
        <end position="835"/>
    </location>
</feature>
<feature type="repeat" description="ANK 1">
    <location>
        <begin position="66"/>
        <end position="96"/>
    </location>
</feature>
<feature type="repeat" description="ANK 2">
    <location>
        <begin position="100"/>
        <end position="129"/>
    </location>
</feature>
<feature type="repeat" description="ANK 3">
    <location>
        <begin position="133"/>
        <end position="162"/>
    </location>
</feature>
<feature type="repeat" description="ANK 4">
    <location>
        <begin position="166"/>
        <end position="195"/>
    </location>
</feature>
<feature type="repeat" description="ANK 5">
    <location>
        <begin position="199"/>
        <end position="228"/>
    </location>
</feature>
<feature type="repeat" description="ANK 6">
    <location>
        <begin position="234"/>
        <end position="263"/>
    </location>
</feature>
<feature type="repeat" description="ANK 7">
    <location>
        <begin position="269"/>
        <end position="298"/>
    </location>
</feature>
<feature type="repeat" description="ANK 8">
    <location>
        <begin position="304"/>
        <end position="335"/>
    </location>
</feature>
<feature type="repeat" description="ANK 9">
    <location>
        <begin position="339"/>
        <end position="368"/>
    </location>
</feature>
<feature type="repeat" description="ANK 10">
    <location>
        <begin position="381"/>
        <end position="410"/>
    </location>
</feature>
<feature type="domain" description="Protein kinase" evidence="4">
    <location>
        <begin position="463"/>
        <end position="723"/>
    </location>
</feature>
<feature type="coiled-coil region" evidence="3">
    <location>
        <begin position="21"/>
        <end position="50"/>
    </location>
</feature>
<feature type="active site" description="Proton acceptor" evidence="4">
    <location>
        <position position="588"/>
    </location>
</feature>
<feature type="binding site" evidence="4">
    <location>
        <begin position="469"/>
        <end position="477"/>
    </location>
    <ligand>
        <name>ATP</name>
        <dbReference type="ChEBI" id="CHEBI:30616"/>
    </ligand>
</feature>
<feature type="binding site" evidence="4">
    <location>
        <position position="490"/>
    </location>
    <ligand>
        <name>ATP</name>
        <dbReference type="ChEBI" id="CHEBI:30616"/>
    </ligand>
</feature>
<feature type="lipid moiety-binding region" description="N-myristoyl glycine" evidence="3">
    <location>
        <position position="2"/>
    </location>
</feature>
<name>TNI3K_RAT</name>
<evidence type="ECO:0000250" key="1"/>
<evidence type="ECO:0000250" key="2">
    <source>
        <dbReference type="UniProtKB" id="Q59H18"/>
    </source>
</evidence>
<evidence type="ECO:0000255" key="3"/>
<evidence type="ECO:0000255" key="4">
    <source>
        <dbReference type="PROSITE-ProRule" id="PRU00159"/>
    </source>
</evidence>
<evidence type="ECO:0000305" key="5"/>
<evidence type="ECO:0000312" key="6">
    <source>
        <dbReference type="EMBL" id="AAP72031.1"/>
    </source>
</evidence>
<evidence type="ECO:0000312" key="7">
    <source>
        <dbReference type="RGD" id="727908"/>
    </source>
</evidence>
<dbReference type="EC" id="2.7.11.1"/>
<dbReference type="EMBL" id="AY303692">
    <property type="protein sequence ID" value="AAP72031.1"/>
    <property type="molecule type" value="mRNA"/>
</dbReference>
<dbReference type="RefSeq" id="NP_861434.1">
    <property type="nucleotide sequence ID" value="NM_181769.1"/>
</dbReference>
<dbReference type="SMR" id="Q7TQP6"/>
<dbReference type="FunCoup" id="Q7TQP6">
    <property type="interactions" value="33"/>
</dbReference>
<dbReference type="STRING" id="10116.ENSRNOP00000031479"/>
<dbReference type="ChEMBL" id="CHEMBL4802010"/>
<dbReference type="iPTMnet" id="Q7TQP6"/>
<dbReference type="PhosphoSitePlus" id="Q7TQP6"/>
<dbReference type="PaxDb" id="10116-ENSRNOP00000031479"/>
<dbReference type="GeneID" id="295531"/>
<dbReference type="KEGG" id="rno:295531"/>
<dbReference type="AGR" id="RGD:727908"/>
<dbReference type="CTD" id="51086"/>
<dbReference type="RGD" id="727908">
    <property type="gene designation" value="Tnni3k"/>
</dbReference>
<dbReference type="eggNOG" id="KOG0192">
    <property type="taxonomic scope" value="Eukaryota"/>
</dbReference>
<dbReference type="InParanoid" id="Q7TQP6"/>
<dbReference type="OrthoDB" id="15997at9989"/>
<dbReference type="PhylomeDB" id="Q7TQP6"/>
<dbReference type="PRO" id="PR:Q7TQP6"/>
<dbReference type="Proteomes" id="UP000002494">
    <property type="component" value="Unplaced"/>
</dbReference>
<dbReference type="GO" id="GO:0005737">
    <property type="term" value="C:cytoplasm"/>
    <property type="evidence" value="ECO:0000250"/>
    <property type="project" value="BHF-UCL"/>
</dbReference>
<dbReference type="GO" id="GO:0005634">
    <property type="term" value="C:nucleus"/>
    <property type="evidence" value="ECO:0000250"/>
    <property type="project" value="BHF-UCL"/>
</dbReference>
<dbReference type="GO" id="GO:0005524">
    <property type="term" value="F:ATP binding"/>
    <property type="evidence" value="ECO:0007669"/>
    <property type="project" value="UniProtKB-KW"/>
</dbReference>
<dbReference type="GO" id="GO:0046872">
    <property type="term" value="F:metal ion binding"/>
    <property type="evidence" value="ECO:0007669"/>
    <property type="project" value="UniProtKB-KW"/>
</dbReference>
<dbReference type="GO" id="GO:0004672">
    <property type="term" value="F:protein kinase activity"/>
    <property type="evidence" value="ECO:0000250"/>
    <property type="project" value="BHF-UCL"/>
</dbReference>
<dbReference type="GO" id="GO:0106310">
    <property type="term" value="F:protein serine kinase activity"/>
    <property type="evidence" value="ECO:0007669"/>
    <property type="project" value="RHEA"/>
</dbReference>
<dbReference type="GO" id="GO:0004674">
    <property type="term" value="F:protein serine/threonine kinase activity"/>
    <property type="evidence" value="ECO:0007669"/>
    <property type="project" value="UniProtKB-KW"/>
</dbReference>
<dbReference type="GO" id="GO:0061629">
    <property type="term" value="F:RNA polymerase II-specific DNA-binding transcription factor binding"/>
    <property type="evidence" value="ECO:0000318"/>
    <property type="project" value="GO_Central"/>
</dbReference>
<dbReference type="GO" id="GO:0086069">
    <property type="term" value="P:bundle of His cell to Purkinje myocyte communication"/>
    <property type="evidence" value="ECO:0000250"/>
    <property type="project" value="BHF-UCL"/>
</dbReference>
<dbReference type="GO" id="GO:1903779">
    <property type="term" value="P:regulation of cardiac conduction"/>
    <property type="evidence" value="ECO:0000250"/>
    <property type="project" value="BHF-UCL"/>
</dbReference>
<dbReference type="GO" id="GO:0055117">
    <property type="term" value="P:regulation of cardiac muscle contraction"/>
    <property type="evidence" value="ECO:0000250"/>
    <property type="project" value="BHF-UCL"/>
</dbReference>
<dbReference type="GO" id="GO:0002027">
    <property type="term" value="P:regulation of heart rate"/>
    <property type="evidence" value="ECO:0000250"/>
    <property type="project" value="BHF-UCL"/>
</dbReference>
<dbReference type="GO" id="GO:0006357">
    <property type="term" value="P:regulation of transcription by RNA polymerase II"/>
    <property type="evidence" value="ECO:0000318"/>
    <property type="project" value="GO_Central"/>
</dbReference>
<dbReference type="CDD" id="cd14064">
    <property type="entry name" value="PKc_TNNI3K"/>
    <property type="match status" value="1"/>
</dbReference>
<dbReference type="FunFam" id="1.10.510.10:FF:000259">
    <property type="entry name" value="Serine/threonine-protein kinase TNNI3K"/>
    <property type="match status" value="1"/>
</dbReference>
<dbReference type="FunFam" id="1.25.40.20:FF:000077">
    <property type="entry name" value="Serine/threonine-protein kinase TNNI3K"/>
    <property type="match status" value="1"/>
</dbReference>
<dbReference type="FunFam" id="1.25.40.20:FF:000089">
    <property type="entry name" value="serine/threonine-protein kinase TNNI3K"/>
    <property type="match status" value="1"/>
</dbReference>
<dbReference type="Gene3D" id="1.25.40.20">
    <property type="entry name" value="Ankyrin repeat-containing domain"/>
    <property type="match status" value="3"/>
</dbReference>
<dbReference type="Gene3D" id="1.10.510.10">
    <property type="entry name" value="Transferase(Phosphotransferase) domain 1"/>
    <property type="match status" value="1"/>
</dbReference>
<dbReference type="InterPro" id="IPR002110">
    <property type="entry name" value="Ankyrin_rpt"/>
</dbReference>
<dbReference type="InterPro" id="IPR036770">
    <property type="entry name" value="Ankyrin_rpt-contain_sf"/>
</dbReference>
<dbReference type="InterPro" id="IPR011009">
    <property type="entry name" value="Kinase-like_dom_sf"/>
</dbReference>
<dbReference type="InterPro" id="IPR000719">
    <property type="entry name" value="Prot_kinase_dom"/>
</dbReference>
<dbReference type="InterPro" id="IPR017441">
    <property type="entry name" value="Protein_kinase_ATP_BS"/>
</dbReference>
<dbReference type="InterPro" id="IPR001245">
    <property type="entry name" value="Ser-Thr/Tyr_kinase_cat_dom"/>
</dbReference>
<dbReference type="PANTHER" id="PTHR24198">
    <property type="entry name" value="ANKYRIN REPEAT AND PROTEIN KINASE DOMAIN-CONTAINING PROTEIN"/>
    <property type="match status" value="1"/>
</dbReference>
<dbReference type="PANTHER" id="PTHR24198:SF183">
    <property type="entry name" value="SUPPRESSOR_ENHANCER OF LIN-12"/>
    <property type="match status" value="1"/>
</dbReference>
<dbReference type="Pfam" id="PF00023">
    <property type="entry name" value="Ank"/>
    <property type="match status" value="3"/>
</dbReference>
<dbReference type="Pfam" id="PF12796">
    <property type="entry name" value="Ank_2"/>
    <property type="match status" value="2"/>
</dbReference>
<dbReference type="Pfam" id="PF07714">
    <property type="entry name" value="PK_Tyr_Ser-Thr"/>
    <property type="match status" value="1"/>
</dbReference>
<dbReference type="PRINTS" id="PR01415">
    <property type="entry name" value="ANKYRIN"/>
</dbReference>
<dbReference type="SMART" id="SM00248">
    <property type="entry name" value="ANK"/>
    <property type="match status" value="10"/>
</dbReference>
<dbReference type="SUPFAM" id="SSF48403">
    <property type="entry name" value="Ankyrin repeat"/>
    <property type="match status" value="1"/>
</dbReference>
<dbReference type="SUPFAM" id="SSF56112">
    <property type="entry name" value="Protein kinase-like (PK-like)"/>
    <property type="match status" value="1"/>
</dbReference>
<dbReference type="PROSITE" id="PS50297">
    <property type="entry name" value="ANK_REP_REGION"/>
    <property type="match status" value="1"/>
</dbReference>
<dbReference type="PROSITE" id="PS50088">
    <property type="entry name" value="ANK_REPEAT"/>
    <property type="match status" value="6"/>
</dbReference>
<dbReference type="PROSITE" id="PS00107">
    <property type="entry name" value="PROTEIN_KINASE_ATP"/>
    <property type="match status" value="1"/>
</dbReference>
<dbReference type="PROSITE" id="PS50011">
    <property type="entry name" value="PROTEIN_KINASE_DOM"/>
    <property type="match status" value="1"/>
</dbReference>
<gene>
    <name evidence="2" type="primary">Tnni3k</name>
    <name evidence="7" type="synonym">Cark</name>
</gene>